<protein>
    <recommendedName>
        <fullName evidence="3">Large ribosomal subunit protein bL33</fullName>
    </recommendedName>
    <alternativeName>
        <fullName>50S ribosomal protein L33</fullName>
    </alternativeName>
</protein>
<comment type="function">
    <text>Found on the solvent side of the large subunit.</text>
</comment>
<comment type="function">
    <text>Contacts the E site tRNA.</text>
</comment>
<comment type="subunit">
    <text>Part of the 50S ribosomal subunit.</text>
</comment>
<comment type="mass spectrometry"/>
<comment type="similarity">
    <text evidence="3">Belongs to the bacterial ribosomal protein bL33 family.</text>
</comment>
<comment type="sequence caution" evidence="3">
    <conflict type="frameshift">
        <sequence resource="EMBL" id="L10348"/>
    </conflict>
</comment>
<reference key="1">
    <citation type="journal article" date="1991" name="FEBS Lett.">
        <title>Molecular cloning, nucleotide sequence and expression of the tufB gene encoding elongation factor Tu from Thermus thermophilus HB8.</title>
        <authorList>
            <person name="Satoh M."/>
            <person name="Tanaka T."/>
            <person name="Kushiro A."/>
            <person name="Hakoshima T."/>
            <person name="Tomita K."/>
        </authorList>
    </citation>
    <scope>NUCLEOTIDE SEQUENCE [GENOMIC DNA]</scope>
</reference>
<reference key="2">
    <citation type="journal article" date="1992" name="J. Bacteriol.">
        <title>Identification of the gene encoding transcription factor NusG of Thermus thermophilus.</title>
        <authorList>
            <person name="Heinrich T."/>
            <person name="Schroeder W."/>
            <person name="Erdmann V.A."/>
            <person name="Hartmann R.K."/>
        </authorList>
    </citation>
    <scope>NUCLEOTIDE SEQUENCE [GENOMIC DNA]</scope>
    <source>
        <strain>ATCC 27634 / DSM 579 / HB8</strain>
    </source>
</reference>
<reference key="3">
    <citation type="submission" date="2004-11" db="EMBL/GenBank/DDBJ databases">
        <title>Complete genome sequence of Thermus thermophilus HB8.</title>
        <authorList>
            <person name="Masui R."/>
            <person name="Kurokawa K."/>
            <person name="Nakagawa N."/>
            <person name="Tokunaga F."/>
            <person name="Koyama Y."/>
            <person name="Shibata T."/>
            <person name="Oshima T."/>
            <person name="Yokoyama S."/>
            <person name="Yasunaga T."/>
            <person name="Kuramitsu S."/>
        </authorList>
    </citation>
    <scope>NUCLEOTIDE SEQUENCE [LARGE SCALE GENOMIC DNA]</scope>
    <source>
        <strain>ATCC 27634 / DSM 579 / HB8</strain>
    </source>
</reference>
<reference key="4">
    <citation type="journal article" date="2000" name="Biol. Chem.">
        <title>Identification of the 50S ribosomal proteins from the eubacterium Thermus thermophilus.</title>
        <authorList>
            <person name="Katsani K.R."/>
            <person name="Tsiboli P."/>
            <person name="Anagnostopoulos K."/>
            <person name="Urlaub H."/>
            <person name="Choli-Papadopoulou T."/>
        </authorList>
    </citation>
    <scope>PROTEIN SEQUENCE OF 2-23</scope>
    <source>
        <strain>ATCC 27634 / DSM 579 / HB8</strain>
    </source>
</reference>
<reference key="5">
    <citation type="journal article" date="1994" name="Gene">
        <title>Identification of genes encoding ribosomal protein L33 from Bacillus licheniformis, Thermus thermophilus and Thermotoga maritima.</title>
        <authorList>
            <person name="Sharp P.M."/>
        </authorList>
    </citation>
    <scope>IDENTIFICATION</scope>
</reference>
<reference key="6">
    <citation type="journal article" date="2005" name="Proteomics">
        <title>Extending ribosomal protein identifications to unsequenced bacterial strains using matrix-assisted laser desorption/ionization mass spectrometry.</title>
        <authorList>
            <person name="Suh M.-J."/>
            <person name="Hamburg D.M."/>
            <person name="Gregory S.T."/>
            <person name="Dahlberg A.E."/>
            <person name="Limbach P.A."/>
        </authorList>
    </citation>
    <scope>MASS SPECTROMETRY</scope>
    <source>
        <strain>ATCC 27634 / DSM 579 / HB8</strain>
    </source>
</reference>
<reference key="7">
    <citation type="journal article" date="2001" name="Science">
        <title>Crystal structure of the ribosome at 5.5 A resolution.</title>
        <authorList>
            <person name="Yusupov M.M."/>
            <person name="Yusupova G.Z."/>
            <person name="Baucom A."/>
            <person name="Lieberman K."/>
            <person name="Earnest T.N."/>
            <person name="Cate J.H.D."/>
            <person name="Noller H.F."/>
        </authorList>
    </citation>
    <scope>STRUCTURE OF THE RIBOSOME</scope>
</reference>
<reference key="8">
    <citation type="journal article" date="2008" name="Science">
        <title>Insights into translational termination from the structure of RF2 bound to the ribosome.</title>
        <authorList>
            <person name="Weixlbaumer A."/>
            <person name="Jin H."/>
            <person name="Neubauer C."/>
            <person name="Voorhees R.M."/>
            <person name="Petry S."/>
            <person name="Kelley A.C."/>
            <person name="Ramakrishnan V."/>
        </authorList>
    </citation>
    <scope>X-RAY CRYSTALLOGRAPHY (3.45 ANGSTROMS) OF 70S RIBOSOME IN COMPLEX WITH RF2</scope>
    <scope>SUBUNIT</scope>
</reference>
<reference key="9">
    <citation type="journal article" date="2010" name="Proc. Natl. Acad. Sci. U.S.A.">
        <title>Structure of the 70S ribosome bound to release factor 2 and a substrate analog provides insights into catalysis of peptide release.</title>
        <authorList>
            <person name="Jin H."/>
            <person name="Kelley A.C."/>
            <person name="Loakes D."/>
            <person name="Ramakrishnan V."/>
        </authorList>
    </citation>
    <scope>X-RAY CRYSTALLOGRAPHY (3.10 ANGSTROMS) OF 70S RIBOSOME IN COMPLEX WITH RF2</scope>
    <scope>SUBUNIT</scope>
</reference>
<keyword id="KW-0002">3D-structure</keyword>
<keyword id="KW-0903">Direct protein sequencing</keyword>
<keyword id="KW-1185">Reference proteome</keyword>
<keyword id="KW-0687">Ribonucleoprotein</keyword>
<keyword id="KW-0689">Ribosomal protein</keyword>
<keyword id="KW-0694">RNA-binding</keyword>
<keyword id="KW-0699">rRNA-binding</keyword>
<keyword id="KW-0820">tRNA-binding</keyword>
<accession>P35871</accession>
<accession>Q5SLP3</accession>
<sequence>MASEVRIKLLLECTECKRRNYATEKNKRNTPNKLELRKYCPWCRKHTVHREVKI</sequence>
<gene>
    <name type="primary">rpmG</name>
    <name type="synonym">rpl33</name>
    <name type="ordered locus">TTHA0250</name>
</gene>
<name>RL33_THET8</name>
<dbReference type="EMBL" id="X61957">
    <property type="status" value="NOT_ANNOTATED_CDS"/>
    <property type="molecule type" value="Genomic_DNA"/>
</dbReference>
<dbReference type="EMBL" id="L10348">
    <property type="status" value="NOT_ANNOTATED_CDS"/>
    <property type="molecule type" value="Genomic_DNA"/>
</dbReference>
<dbReference type="EMBL" id="AP008226">
    <property type="protein sequence ID" value="BAD70073.1"/>
    <property type="molecule type" value="Genomic_DNA"/>
</dbReference>
<dbReference type="RefSeq" id="WP_008630505.1">
    <property type="nucleotide sequence ID" value="NC_006461.1"/>
</dbReference>
<dbReference type="RefSeq" id="YP_143516.1">
    <property type="nucleotide sequence ID" value="NC_006461.1"/>
</dbReference>
<dbReference type="PDB" id="1VVJ">
    <property type="method" value="X-ray"/>
    <property type="resolution" value="3.44 A"/>
    <property type="chains" value="R6/Y6=1-54"/>
</dbReference>
<dbReference type="PDB" id="1VY4">
    <property type="method" value="X-ray"/>
    <property type="resolution" value="2.60 A"/>
    <property type="chains" value="B6/D6=1-54"/>
</dbReference>
<dbReference type="PDB" id="1VY5">
    <property type="method" value="X-ray"/>
    <property type="resolution" value="2.55 A"/>
    <property type="chains" value="B6/D6=1-54"/>
</dbReference>
<dbReference type="PDB" id="1VY6">
    <property type="method" value="X-ray"/>
    <property type="resolution" value="2.90 A"/>
    <property type="chains" value="B6/D6=1-54"/>
</dbReference>
<dbReference type="PDB" id="1VY7">
    <property type="method" value="X-ray"/>
    <property type="resolution" value="2.80 A"/>
    <property type="chains" value="B6/D6=1-54"/>
</dbReference>
<dbReference type="PDB" id="4L47">
    <property type="method" value="X-ray"/>
    <property type="resolution" value="3.22 A"/>
    <property type="chains" value="R6/Y6=1-54"/>
</dbReference>
<dbReference type="PDB" id="4L71">
    <property type="method" value="X-ray"/>
    <property type="resolution" value="3.90 A"/>
    <property type="chains" value="R6/Y6=1-54"/>
</dbReference>
<dbReference type="PDB" id="4LEL">
    <property type="method" value="X-ray"/>
    <property type="resolution" value="3.90 A"/>
    <property type="chains" value="R6/Y6=1-54"/>
</dbReference>
<dbReference type="PDB" id="4LFZ">
    <property type="method" value="X-ray"/>
    <property type="resolution" value="3.92 A"/>
    <property type="chains" value="R6/Y6=1-54"/>
</dbReference>
<dbReference type="PDB" id="4LNT">
    <property type="method" value="X-ray"/>
    <property type="resolution" value="2.94 A"/>
    <property type="chains" value="R6/Y6=1-54"/>
</dbReference>
<dbReference type="PDB" id="4LSK">
    <property type="method" value="X-ray"/>
    <property type="resolution" value="3.48 A"/>
    <property type="chains" value="R6/Y6=1-54"/>
</dbReference>
<dbReference type="PDB" id="4LT8">
    <property type="method" value="X-ray"/>
    <property type="resolution" value="3.14 A"/>
    <property type="chains" value="R6/Y6=1-54"/>
</dbReference>
<dbReference type="PDB" id="4P6F">
    <property type="method" value="X-ray"/>
    <property type="resolution" value="3.60 A"/>
    <property type="chains" value="R6/Y6=1-54"/>
</dbReference>
<dbReference type="PDB" id="4P70">
    <property type="method" value="X-ray"/>
    <property type="resolution" value="3.68 A"/>
    <property type="chains" value="R6/Y6=1-54"/>
</dbReference>
<dbReference type="PDB" id="4TUA">
    <property type="method" value="X-ray"/>
    <property type="resolution" value="3.60 A"/>
    <property type="chains" value="R6/Y6=1-54"/>
</dbReference>
<dbReference type="PDB" id="4TUB">
    <property type="method" value="X-ray"/>
    <property type="resolution" value="3.60 A"/>
    <property type="chains" value="R6/Y6=1-54"/>
</dbReference>
<dbReference type="PDB" id="4TUC">
    <property type="method" value="X-ray"/>
    <property type="resolution" value="3.60 A"/>
    <property type="chains" value="R6/Y6=1-54"/>
</dbReference>
<dbReference type="PDB" id="4TUD">
    <property type="method" value="X-ray"/>
    <property type="resolution" value="3.60 A"/>
    <property type="chains" value="R6/Y6=1-54"/>
</dbReference>
<dbReference type="PDB" id="4TUE">
    <property type="method" value="X-ray"/>
    <property type="resolution" value="3.50 A"/>
    <property type="chains" value="R6/Y6=1-54"/>
</dbReference>
<dbReference type="PDB" id="4V4P">
    <property type="method" value="X-ray"/>
    <property type="resolution" value="5.50 A"/>
    <property type="chains" value="6=25-39"/>
</dbReference>
<dbReference type="PDB" id="4V4X">
    <property type="method" value="X-ray"/>
    <property type="resolution" value="5.00 A"/>
    <property type="chains" value="B5=1-54"/>
</dbReference>
<dbReference type="PDB" id="4V4Y">
    <property type="method" value="X-ray"/>
    <property type="resolution" value="5.50 A"/>
    <property type="chains" value="B5=1-54"/>
</dbReference>
<dbReference type="PDB" id="4V4Z">
    <property type="method" value="X-ray"/>
    <property type="resolution" value="4.51 A"/>
    <property type="chains" value="B5=1-54"/>
</dbReference>
<dbReference type="PDB" id="4V51">
    <property type="method" value="X-ray"/>
    <property type="resolution" value="2.80 A"/>
    <property type="chains" value="B6/D6=2-54"/>
</dbReference>
<dbReference type="PDB" id="4V5A">
    <property type="method" value="X-ray"/>
    <property type="resolution" value="3.50 A"/>
    <property type="chains" value="B6/D6=2-54"/>
</dbReference>
<dbReference type="PDB" id="4V5C">
    <property type="method" value="X-ray"/>
    <property type="resolution" value="3.30 A"/>
    <property type="chains" value="B6/D6=1-54"/>
</dbReference>
<dbReference type="PDB" id="4V5D">
    <property type="method" value="X-ray"/>
    <property type="resolution" value="3.50 A"/>
    <property type="chains" value="B6/D6=1-54"/>
</dbReference>
<dbReference type="PDB" id="4V5E">
    <property type="method" value="X-ray"/>
    <property type="resolution" value="3.45 A"/>
    <property type="chains" value="B6/D6=1-54"/>
</dbReference>
<dbReference type="PDB" id="4V5F">
    <property type="method" value="X-ray"/>
    <property type="resolution" value="3.60 A"/>
    <property type="chains" value="B6/D6=1-54"/>
</dbReference>
<dbReference type="PDB" id="4V5G">
    <property type="method" value="X-ray"/>
    <property type="resolution" value="3.60 A"/>
    <property type="chains" value="B6/D6=1-54"/>
</dbReference>
<dbReference type="PDB" id="4V5J">
    <property type="method" value="X-ray"/>
    <property type="resolution" value="3.10 A"/>
    <property type="chains" value="B6/D6=1-54"/>
</dbReference>
<dbReference type="PDB" id="4V5K">
    <property type="method" value="X-ray"/>
    <property type="resolution" value="3.20 A"/>
    <property type="chains" value="B6/D6=1-54"/>
</dbReference>
<dbReference type="PDB" id="4V5L">
    <property type="method" value="X-ray"/>
    <property type="resolution" value="3.10 A"/>
    <property type="chains" value="B6=1-54"/>
</dbReference>
<dbReference type="PDB" id="4V5M">
    <property type="method" value="EM"/>
    <property type="resolution" value="7.80 A"/>
    <property type="chains" value="B6=1-54"/>
</dbReference>
<dbReference type="PDB" id="4V5N">
    <property type="method" value="EM"/>
    <property type="resolution" value="7.60 A"/>
    <property type="chains" value="B6=1-54"/>
</dbReference>
<dbReference type="PDB" id="4V5P">
    <property type="method" value="X-ray"/>
    <property type="resolution" value="3.10 A"/>
    <property type="chains" value="B6/D6=1-54"/>
</dbReference>
<dbReference type="PDB" id="4V5Q">
    <property type="method" value="X-ray"/>
    <property type="resolution" value="3.10 A"/>
    <property type="chains" value="B6/D6=1-54"/>
</dbReference>
<dbReference type="PDB" id="4V5R">
    <property type="method" value="X-ray"/>
    <property type="resolution" value="3.10 A"/>
    <property type="chains" value="B6/D6=1-54"/>
</dbReference>
<dbReference type="PDB" id="4V5S">
    <property type="method" value="X-ray"/>
    <property type="resolution" value="3.10 A"/>
    <property type="chains" value="B6/D6=1-54"/>
</dbReference>
<dbReference type="PDB" id="4V68">
    <property type="method" value="EM"/>
    <property type="resolution" value="6.40 A"/>
    <property type="chains" value="B6=9-53"/>
</dbReference>
<dbReference type="PDB" id="4V6A">
    <property type="method" value="X-ray"/>
    <property type="resolution" value="3.10 A"/>
    <property type="chains" value="B6/D6=1-54"/>
</dbReference>
<dbReference type="PDB" id="4V6F">
    <property type="method" value="X-ray"/>
    <property type="resolution" value="3.10 A"/>
    <property type="chains" value="A6/D6=1-54"/>
</dbReference>
<dbReference type="PDB" id="4V6G">
    <property type="method" value="X-ray"/>
    <property type="resolution" value="3.50 A"/>
    <property type="chains" value="B6/D6=1-54"/>
</dbReference>
<dbReference type="PDB" id="4V7J">
    <property type="method" value="X-ray"/>
    <property type="resolution" value="3.30 A"/>
    <property type="chains" value="A6/B6=1-54"/>
</dbReference>
<dbReference type="PDB" id="4V7K">
    <property type="method" value="X-ray"/>
    <property type="resolution" value="3.60 A"/>
    <property type="chains" value="A6/B6=1-54"/>
</dbReference>
<dbReference type="PDB" id="4V7L">
    <property type="method" value="X-ray"/>
    <property type="resolution" value="3.00 A"/>
    <property type="chains" value="B6/D6=1-54"/>
</dbReference>
<dbReference type="PDB" id="4V7M">
    <property type="method" value="X-ray"/>
    <property type="resolution" value="3.45 A"/>
    <property type="chains" value="B6/D6=1-54"/>
</dbReference>
<dbReference type="PDB" id="4V7W">
    <property type="method" value="X-ray"/>
    <property type="resolution" value="3.00 A"/>
    <property type="chains" value="B6/D6=1-54"/>
</dbReference>
<dbReference type="PDB" id="4V7X">
    <property type="method" value="X-ray"/>
    <property type="resolution" value="3.00 A"/>
    <property type="chains" value="B6/D6=1-54"/>
</dbReference>
<dbReference type="PDB" id="4V7Y">
    <property type="method" value="X-ray"/>
    <property type="resolution" value="3.00 A"/>
    <property type="chains" value="B6/D6=1-54"/>
</dbReference>
<dbReference type="PDB" id="4V7Z">
    <property type="method" value="X-ray"/>
    <property type="resolution" value="3.10 A"/>
    <property type="chains" value="B6/D6=1-54"/>
</dbReference>
<dbReference type="PDB" id="4V87">
    <property type="method" value="X-ray"/>
    <property type="resolution" value="3.10 A"/>
    <property type="chains" value="A6/D6=9-53"/>
</dbReference>
<dbReference type="PDB" id="4V8A">
    <property type="method" value="X-ray"/>
    <property type="resolution" value="3.20 A"/>
    <property type="chains" value="A6/B6=1-54"/>
</dbReference>
<dbReference type="PDB" id="4V8B">
    <property type="method" value="X-ray"/>
    <property type="resolution" value="3.00 A"/>
    <property type="chains" value="B6/D6=1-54"/>
</dbReference>
<dbReference type="PDB" id="4V8C">
    <property type="method" value="X-ray"/>
    <property type="resolution" value="3.30 A"/>
    <property type="chains" value="A6/B6=1-54"/>
</dbReference>
<dbReference type="PDB" id="4V8D">
    <property type="method" value="X-ray"/>
    <property type="resolution" value="3.00 A"/>
    <property type="chains" value="B6/D6=1-54"/>
</dbReference>
<dbReference type="PDB" id="4V8E">
    <property type="method" value="X-ray"/>
    <property type="resolution" value="3.30 A"/>
    <property type="chains" value="A6/C6=1-54"/>
</dbReference>
<dbReference type="PDB" id="4V8F">
    <property type="method" value="X-ray"/>
    <property type="resolution" value="3.30 A"/>
    <property type="chains" value="A6/D6=1-54"/>
</dbReference>
<dbReference type="PDB" id="4V8G">
    <property type="method" value="X-ray"/>
    <property type="resolution" value="3.00 A"/>
    <property type="chains" value="B6/D6=1-54"/>
</dbReference>
<dbReference type="PDB" id="4V8H">
    <property type="method" value="X-ray"/>
    <property type="resolution" value="3.10 A"/>
    <property type="chains" value="B6/D6=1-54"/>
</dbReference>
<dbReference type="PDB" id="4V8I">
    <property type="method" value="X-ray"/>
    <property type="resolution" value="2.70 A"/>
    <property type="chains" value="B6/D6=1-54"/>
</dbReference>
<dbReference type="PDB" id="4V8J">
    <property type="method" value="X-ray"/>
    <property type="resolution" value="3.90 A"/>
    <property type="chains" value="B6/D6=1-54"/>
</dbReference>
<dbReference type="PDB" id="4V8N">
    <property type="method" value="X-ray"/>
    <property type="resolution" value="3.10 A"/>
    <property type="chains" value="B6/D6=1-54"/>
</dbReference>
<dbReference type="PDB" id="4V8O">
    <property type="method" value="X-ray"/>
    <property type="resolution" value="3.80 A"/>
    <property type="chains" value="B6=1-54"/>
</dbReference>
<dbReference type="PDB" id="4V8Q">
    <property type="method" value="X-ray"/>
    <property type="resolution" value="3.10 A"/>
    <property type="chains" value="A6=1-54"/>
</dbReference>
<dbReference type="PDB" id="4V8U">
    <property type="method" value="X-ray"/>
    <property type="resolution" value="3.70 A"/>
    <property type="chains" value="B6/D6=1-54"/>
</dbReference>
<dbReference type="PDB" id="4V8X">
    <property type="method" value="X-ray"/>
    <property type="resolution" value="3.35 A"/>
    <property type="chains" value="B6/D6=1-54"/>
</dbReference>
<dbReference type="PDB" id="4V90">
    <property type="method" value="X-ray"/>
    <property type="resolution" value="2.95 A"/>
    <property type="chains" value="B6=2-54"/>
</dbReference>
<dbReference type="PDB" id="4V95">
    <property type="method" value="X-ray"/>
    <property type="resolution" value="3.20 A"/>
    <property type="chains" value="B6/D6=1-54"/>
</dbReference>
<dbReference type="PDB" id="4V97">
    <property type="method" value="X-ray"/>
    <property type="resolution" value="3.52 A"/>
    <property type="chains" value="B6/D6=1-54"/>
</dbReference>
<dbReference type="PDB" id="4V9A">
    <property type="method" value="X-ray"/>
    <property type="resolution" value="3.30 A"/>
    <property type="chains" value="B6/D6=1-54"/>
</dbReference>
<dbReference type="PDB" id="4V9B">
    <property type="method" value="X-ray"/>
    <property type="resolution" value="3.10 A"/>
    <property type="chains" value="B6/D6=1-54"/>
</dbReference>
<dbReference type="PDB" id="4V9H">
    <property type="method" value="X-ray"/>
    <property type="resolution" value="2.86 A"/>
    <property type="chains" value="B6=1-54"/>
</dbReference>
<dbReference type="PDB" id="4V9I">
    <property type="method" value="X-ray"/>
    <property type="resolution" value="3.30 A"/>
    <property type="chains" value="B6/D6=9-52"/>
</dbReference>
<dbReference type="PDB" id="4V9R">
    <property type="method" value="X-ray"/>
    <property type="resolution" value="3.00 A"/>
    <property type="chains" value="B6/D6=1-54"/>
</dbReference>
<dbReference type="PDB" id="4V9S">
    <property type="method" value="X-ray"/>
    <property type="resolution" value="3.10 A"/>
    <property type="chains" value="B6/D6=1-54"/>
</dbReference>
<dbReference type="PDB" id="4W2E">
    <property type="method" value="X-ray"/>
    <property type="resolution" value="2.90 A"/>
    <property type="chains" value="6=1-54"/>
</dbReference>
<dbReference type="PDB" id="4W2F">
    <property type="method" value="X-ray"/>
    <property type="resolution" value="2.40 A"/>
    <property type="chains" value="B6/D6=1-54"/>
</dbReference>
<dbReference type="PDB" id="4W2G">
    <property type="method" value="X-ray"/>
    <property type="resolution" value="2.55 A"/>
    <property type="chains" value="B6/D6=1-54"/>
</dbReference>
<dbReference type="PDB" id="4W2H">
    <property type="method" value="X-ray"/>
    <property type="resolution" value="2.70 A"/>
    <property type="chains" value="B6/D6=1-54"/>
</dbReference>
<dbReference type="PDB" id="4W2I">
    <property type="method" value="X-ray"/>
    <property type="resolution" value="2.70 A"/>
    <property type="chains" value="B6/D6=1-54"/>
</dbReference>
<dbReference type="PDB" id="4W4G">
    <property type="method" value="X-ray"/>
    <property type="resolution" value="3.30 A"/>
    <property type="chains" value="R6/Y6=1-54"/>
</dbReference>
<dbReference type="PDB" id="4WPO">
    <property type="method" value="X-ray"/>
    <property type="resolution" value="2.80 A"/>
    <property type="chains" value="A6/C6=1-54"/>
</dbReference>
<dbReference type="PDB" id="4WQ1">
    <property type="method" value="X-ray"/>
    <property type="resolution" value="3.10 A"/>
    <property type="chains" value="K5/O8=9-53"/>
</dbReference>
<dbReference type="PDB" id="4WQF">
    <property type="method" value="X-ray"/>
    <property type="resolution" value="2.80 A"/>
    <property type="chains" value="A6/C6=1-54"/>
</dbReference>
<dbReference type="PDB" id="4WQR">
    <property type="method" value="X-ray"/>
    <property type="resolution" value="3.15 A"/>
    <property type="chains" value="K5/O8=1-54"/>
</dbReference>
<dbReference type="PDB" id="4WQU">
    <property type="method" value="X-ray"/>
    <property type="resolution" value="2.80 A"/>
    <property type="chains" value="A6/C6=1-54"/>
</dbReference>
<dbReference type="PDB" id="4WQY">
    <property type="method" value="X-ray"/>
    <property type="resolution" value="2.80 A"/>
    <property type="chains" value="A6/C6=1-54"/>
</dbReference>
<dbReference type="PDB" id="4WRO">
    <property type="method" value="X-ray"/>
    <property type="resolution" value="3.05 A"/>
    <property type="chains" value="O8=1-54"/>
</dbReference>
<dbReference type="PDB" id="4WSD">
    <property type="method" value="X-ray"/>
    <property type="resolution" value="2.95 A"/>
    <property type="chains" value="K5/O8=1-54"/>
</dbReference>
<dbReference type="PDB" id="4WT1">
    <property type="method" value="X-ray"/>
    <property type="resolution" value="3.05 A"/>
    <property type="chains" value="K5/O8=1-54"/>
</dbReference>
<dbReference type="PDB" id="4WT8">
    <property type="method" value="X-ray"/>
    <property type="resolution" value="3.40 A"/>
    <property type="chains" value="C7/D7=9-52"/>
</dbReference>
<dbReference type="PDB" id="4WZD">
    <property type="method" value="X-ray"/>
    <property type="resolution" value="3.10 A"/>
    <property type="chains" value="K5/O8=1-54"/>
</dbReference>
<dbReference type="PDB" id="4Y4O">
    <property type="method" value="X-ray"/>
    <property type="resolution" value="2.30 A"/>
    <property type="chains" value="16/26=1-54"/>
</dbReference>
<dbReference type="PDB" id="4Y4P">
    <property type="method" value="X-ray"/>
    <property type="resolution" value="2.50 A"/>
    <property type="chains" value="16/26=1-54"/>
</dbReference>
<dbReference type="PDB" id="4YPB">
    <property type="method" value="X-ray"/>
    <property type="resolution" value="3.40 A"/>
    <property type="chains" value="R6/Y6=1-54"/>
</dbReference>
<dbReference type="PDB" id="4YZV">
    <property type="method" value="X-ray"/>
    <property type="resolution" value="3.10 A"/>
    <property type="chains" value="R6/Y6=1-54"/>
</dbReference>
<dbReference type="PDB" id="4Z3S">
    <property type="method" value="X-ray"/>
    <property type="resolution" value="2.65 A"/>
    <property type="chains" value="16/26=1-54"/>
</dbReference>
<dbReference type="PDB" id="4Z8C">
    <property type="method" value="X-ray"/>
    <property type="resolution" value="2.90 A"/>
    <property type="chains" value="16/26=1-54"/>
</dbReference>
<dbReference type="PDB" id="4ZER">
    <property type="method" value="X-ray"/>
    <property type="resolution" value="3.10 A"/>
    <property type="chains" value="16/26=2-54"/>
</dbReference>
<dbReference type="PDB" id="4ZSN">
    <property type="method" value="X-ray"/>
    <property type="resolution" value="3.60 A"/>
    <property type="chains" value="R6/Y6=1-54"/>
</dbReference>
<dbReference type="PDB" id="5A9Z">
    <property type="method" value="EM"/>
    <property type="resolution" value="4.70 A"/>
    <property type="chains" value="Ac=6-54"/>
</dbReference>
<dbReference type="PDB" id="5AA0">
    <property type="method" value="EM"/>
    <property type="resolution" value="5.00 A"/>
    <property type="chains" value="Ac=6-54"/>
</dbReference>
<dbReference type="PDB" id="5CZP">
    <property type="method" value="X-ray"/>
    <property type="resolution" value="3.30 A"/>
    <property type="chains" value="R6/Y6=1-54"/>
</dbReference>
<dbReference type="PDB" id="5D8B">
    <property type="method" value="X-ray"/>
    <property type="resolution" value="3.63 A"/>
    <property type="chains" value="VB/Z=1-54"/>
</dbReference>
<dbReference type="PDB" id="5DFE">
    <property type="method" value="X-ray"/>
    <property type="resolution" value="3.10 A"/>
    <property type="chains" value="R6/Y6=1-54"/>
</dbReference>
<dbReference type="PDB" id="5DOX">
    <property type="method" value="X-ray"/>
    <property type="resolution" value="3.10 A"/>
    <property type="chains" value="16/26=1-54"/>
</dbReference>
<dbReference type="PDB" id="5DOY">
    <property type="method" value="X-ray"/>
    <property type="resolution" value="2.60 A"/>
    <property type="chains" value="16/26=1-54"/>
</dbReference>
<dbReference type="PDB" id="5F8K">
    <property type="method" value="X-ray"/>
    <property type="resolution" value="2.80 A"/>
    <property type="chains" value="16/26=2-54"/>
</dbReference>
<dbReference type="PDB" id="5FDU">
    <property type="method" value="X-ray"/>
    <property type="resolution" value="2.90 A"/>
    <property type="chains" value="16/26=2-54"/>
</dbReference>
<dbReference type="PDB" id="5FDV">
    <property type="method" value="X-ray"/>
    <property type="resolution" value="2.80 A"/>
    <property type="chains" value="16/26=2-54"/>
</dbReference>
<dbReference type="PDB" id="5HAU">
    <property type="method" value="X-ray"/>
    <property type="resolution" value="3.00 A"/>
    <property type="chains" value="14/24=1-54"/>
</dbReference>
<dbReference type="PDB" id="5HCP">
    <property type="method" value="X-ray"/>
    <property type="resolution" value="2.89 A"/>
    <property type="chains" value="16/26=1-54"/>
</dbReference>
<dbReference type="PDB" id="5HCQ">
    <property type="method" value="X-ray"/>
    <property type="resolution" value="2.80 A"/>
    <property type="chains" value="16/26=1-54"/>
</dbReference>
<dbReference type="PDB" id="5HCR">
    <property type="method" value="X-ray"/>
    <property type="resolution" value="2.80 A"/>
    <property type="chains" value="16/26=1-54"/>
</dbReference>
<dbReference type="PDB" id="5HD1">
    <property type="method" value="X-ray"/>
    <property type="resolution" value="2.70 A"/>
    <property type="chains" value="16/26=1-54"/>
</dbReference>
<dbReference type="PDB" id="5IB7">
    <property type="method" value="X-ray"/>
    <property type="resolution" value="2.99 A"/>
    <property type="chains" value="O8=1-54"/>
</dbReference>
<dbReference type="PDB" id="5IMQ">
    <property type="method" value="EM"/>
    <property type="resolution" value="3.80 A"/>
    <property type="chains" value="x=1-54"/>
</dbReference>
<dbReference type="PDB" id="5IMR">
    <property type="method" value="EM"/>
    <property type="chains" value="x=1-54"/>
</dbReference>
<dbReference type="PDB" id="5J30">
    <property type="method" value="X-ray"/>
    <property type="resolution" value="3.20 A"/>
    <property type="chains" value="R6/Y6=1-54"/>
</dbReference>
<dbReference type="PDB" id="5J3C">
    <property type="method" value="X-ray"/>
    <property type="resolution" value="3.04 A"/>
    <property type="chains" value="R6/Y6=1-54"/>
</dbReference>
<dbReference type="PDB" id="5J4B">
    <property type="method" value="X-ray"/>
    <property type="resolution" value="2.60 A"/>
    <property type="chains" value="16/26=1-54"/>
</dbReference>
<dbReference type="PDB" id="5J4C">
    <property type="method" value="X-ray"/>
    <property type="resolution" value="2.80 A"/>
    <property type="chains" value="16/26=1-54"/>
</dbReference>
<dbReference type="PDB" id="5J8B">
    <property type="method" value="X-ray"/>
    <property type="resolution" value="2.60 A"/>
    <property type="chains" value="6=1-54"/>
</dbReference>
<dbReference type="PDB" id="5OT7">
    <property type="method" value="EM"/>
    <property type="resolution" value="3.80 A"/>
    <property type="chains" value="b=5-54"/>
</dbReference>
<dbReference type="PDB" id="5UQ7">
    <property type="method" value="EM"/>
    <property type="resolution" value="3.50 A"/>
    <property type="chains" value="6=2-54"/>
</dbReference>
<dbReference type="PDB" id="5UQ8">
    <property type="method" value="EM"/>
    <property type="resolution" value="3.20 A"/>
    <property type="chains" value="6=2-54"/>
</dbReference>
<dbReference type="PDB" id="5VP2">
    <property type="method" value="X-ray"/>
    <property type="resolution" value="2.80 A"/>
    <property type="chains" value="16/26=1-54"/>
</dbReference>
<dbReference type="PDB" id="5VPO">
    <property type="method" value="X-ray"/>
    <property type="resolution" value="3.34 A"/>
    <property type="chains" value="R6/Y6=1-54"/>
</dbReference>
<dbReference type="PDB" id="5VPP">
    <property type="method" value="X-ray"/>
    <property type="resolution" value="3.90 A"/>
    <property type="chains" value="R6/Y6=1-54"/>
</dbReference>
<dbReference type="PDB" id="5W4K">
    <property type="method" value="X-ray"/>
    <property type="resolution" value="2.70 A"/>
    <property type="chains" value="16/26=1-54"/>
</dbReference>
<dbReference type="PDB" id="5WIS">
    <property type="method" value="X-ray"/>
    <property type="resolution" value="2.70 A"/>
    <property type="chains" value="16/26=1-54"/>
</dbReference>
<dbReference type="PDB" id="5WIT">
    <property type="method" value="X-ray"/>
    <property type="resolution" value="2.60 A"/>
    <property type="chains" value="16/26=1-54"/>
</dbReference>
<dbReference type="PDB" id="5ZLU">
    <property type="method" value="EM"/>
    <property type="resolution" value="3.60 A"/>
    <property type="chains" value="y=1-54"/>
</dbReference>
<dbReference type="PDB" id="6BUW">
    <property type="method" value="X-ray"/>
    <property type="resolution" value="3.50 A"/>
    <property type="chains" value="R6/Y6=1-54"/>
</dbReference>
<dbReference type="PDB" id="6BZ6">
    <property type="method" value="X-ray"/>
    <property type="resolution" value="3.18 A"/>
    <property type="chains" value="R6/Y6=1-54"/>
</dbReference>
<dbReference type="PDB" id="6BZ7">
    <property type="method" value="X-ray"/>
    <property type="resolution" value="3.68 A"/>
    <property type="chains" value="R6/Y6=1-54"/>
</dbReference>
<dbReference type="PDB" id="6BZ8">
    <property type="method" value="X-ray"/>
    <property type="resolution" value="3.74 A"/>
    <property type="chains" value="R6/Y6=1-54"/>
</dbReference>
<dbReference type="PDB" id="6C5L">
    <property type="method" value="X-ray"/>
    <property type="resolution" value="3.20 A"/>
    <property type="chains" value="B6/D6=1-54"/>
</dbReference>
<dbReference type="PDB" id="6CAE">
    <property type="method" value="X-ray"/>
    <property type="resolution" value="2.60 A"/>
    <property type="chains" value="16/26=1-54"/>
</dbReference>
<dbReference type="PDB" id="6CFJ">
    <property type="method" value="X-ray"/>
    <property type="resolution" value="2.80 A"/>
    <property type="chains" value="16/26=1-54"/>
</dbReference>
<dbReference type="PDB" id="6CFK">
    <property type="method" value="X-ray"/>
    <property type="resolution" value="2.70 A"/>
    <property type="chains" value="16/26=1-54"/>
</dbReference>
<dbReference type="PDB" id="6CFL">
    <property type="method" value="X-ray"/>
    <property type="resolution" value="2.60 A"/>
    <property type="chains" value="16/26=1-54"/>
</dbReference>
<dbReference type="PDB" id="6CZR">
    <property type="method" value="X-ray"/>
    <property type="resolution" value="3.14 A"/>
    <property type="chains" value="16/26=2-54"/>
</dbReference>
<dbReference type="PDB" id="6FKR">
    <property type="method" value="X-ray"/>
    <property type="resolution" value="3.20 A"/>
    <property type="chains" value="16/26=2-54"/>
</dbReference>
<dbReference type="PDB" id="6GSL">
    <property type="method" value="X-ray"/>
    <property type="resolution" value="3.16 A"/>
    <property type="chains" value="O8=1-54"/>
</dbReference>
<dbReference type="PDB" id="6GZQ">
    <property type="method" value="EM"/>
    <property type="resolution" value="3.28 A"/>
    <property type="chains" value="b1=9-53"/>
</dbReference>
<dbReference type="PDB" id="6GZX">
    <property type="method" value="EM"/>
    <property type="resolution" value="4.57 A"/>
    <property type="chains" value="b1/b2=9-53"/>
</dbReference>
<dbReference type="PDB" id="6GZZ">
    <property type="method" value="EM"/>
    <property type="resolution" value="4.13 A"/>
    <property type="chains" value="b1/b2=9-53"/>
</dbReference>
<dbReference type="PDB" id="6N9E">
    <property type="method" value="X-ray"/>
    <property type="resolution" value="3.70 A"/>
    <property type="chains" value="16/26=1-54"/>
</dbReference>
<dbReference type="PDB" id="6N9F">
    <property type="method" value="X-ray"/>
    <property type="resolution" value="3.70 A"/>
    <property type="chains" value="16/26=1-54"/>
</dbReference>
<dbReference type="PDB" id="6ND5">
    <property type="method" value="X-ray"/>
    <property type="resolution" value="2.60 A"/>
    <property type="chains" value="16/26=1-54"/>
</dbReference>
<dbReference type="PDB" id="6ND6">
    <property type="method" value="X-ray"/>
    <property type="resolution" value="2.85 A"/>
    <property type="chains" value="16/26=1-54"/>
</dbReference>
<dbReference type="PDB" id="6NDK">
    <property type="method" value="X-ray"/>
    <property type="resolution" value="3.64 A"/>
    <property type="chains" value="R6/Y6=1-54"/>
</dbReference>
<dbReference type="PDB" id="6NSH">
    <property type="method" value="X-ray"/>
    <property type="resolution" value="3.40 A"/>
    <property type="chains" value="R6/Y6=1-54"/>
</dbReference>
<dbReference type="PDB" id="6NTA">
    <property type="method" value="X-ray"/>
    <property type="resolution" value="3.10 A"/>
    <property type="chains" value="R6/Y6=1-54"/>
</dbReference>
<dbReference type="PDB" id="6NUO">
    <property type="method" value="X-ray"/>
    <property type="resolution" value="3.20 A"/>
    <property type="chains" value="R6/Y6=1-54"/>
</dbReference>
<dbReference type="PDB" id="6NWY">
    <property type="method" value="X-ray"/>
    <property type="resolution" value="3.50 A"/>
    <property type="chains" value="R6/Y6=1-54"/>
</dbReference>
<dbReference type="PDB" id="6O3M">
    <property type="method" value="X-ray"/>
    <property type="resolution" value="3.97 A"/>
    <property type="chains" value="R6/Y6=1-54"/>
</dbReference>
<dbReference type="PDB" id="6O97">
    <property type="method" value="X-ray"/>
    <property type="resolution" value="2.75 A"/>
    <property type="chains" value="16/26=1-54"/>
</dbReference>
<dbReference type="PDB" id="6OF1">
    <property type="method" value="X-ray"/>
    <property type="resolution" value="2.80 A"/>
    <property type="chains" value="16/26=1-54"/>
</dbReference>
<dbReference type="PDB" id="6OF6">
    <property type="method" value="X-ray"/>
    <property type="resolution" value="3.20 A"/>
    <property type="chains" value="R6/Y6=1-54"/>
</dbReference>
<dbReference type="PDB" id="6OJ2">
    <property type="method" value="X-ray"/>
    <property type="resolution" value="3.20 A"/>
    <property type="chains" value="R6/Y6=1-54"/>
</dbReference>
<dbReference type="PDB" id="6OPE">
    <property type="method" value="X-ray"/>
    <property type="resolution" value="3.10 A"/>
    <property type="chains" value="R6/Y6=1-54"/>
</dbReference>
<dbReference type="PDB" id="6ORD">
    <property type="method" value="X-ray"/>
    <property type="resolution" value="3.10 A"/>
    <property type="chains" value="R6/Y6=1-54"/>
</dbReference>
<dbReference type="PDB" id="6OSI">
    <property type="method" value="X-ray"/>
    <property type="resolution" value="4.14 A"/>
    <property type="chains" value="R6/Y6=1-54"/>
</dbReference>
<dbReference type="PDB" id="6OTR">
    <property type="method" value="X-ray"/>
    <property type="resolution" value="3.12 A"/>
    <property type="chains" value="R6/Y6=1-54"/>
</dbReference>
<dbReference type="PDB" id="6OXA">
    <property type="method" value="X-ray"/>
    <property type="resolution" value="3.25 A"/>
    <property type="chains" value="R6/Y6=1-54"/>
</dbReference>
<dbReference type="PDB" id="6OXI">
    <property type="method" value="X-ray"/>
    <property type="resolution" value="3.50 A"/>
    <property type="chains" value="R6/Y6=1-54"/>
</dbReference>
<dbReference type="PDB" id="6Q95">
    <property type="method" value="EM"/>
    <property type="resolution" value="3.70 A"/>
    <property type="chains" value="c=9-53"/>
</dbReference>
<dbReference type="PDB" id="6QNQ">
    <property type="method" value="X-ray"/>
    <property type="resolution" value="3.50 A"/>
    <property type="chains" value="K5/O8=1-54"/>
</dbReference>
<dbReference type="PDB" id="6QNR">
    <property type="method" value="X-ray"/>
    <property type="resolution" value="3.10 A"/>
    <property type="chains" value="K5/O8=1-54"/>
</dbReference>
<dbReference type="PDB" id="6UCQ">
    <property type="method" value="X-ray"/>
    <property type="resolution" value="3.50 A"/>
    <property type="chains" value="16/26=1-54"/>
</dbReference>
<dbReference type="PDB" id="6UO1">
    <property type="method" value="X-ray"/>
    <property type="resolution" value="2.95 A"/>
    <property type="chains" value="16/26=1-54"/>
</dbReference>
<dbReference type="PDB" id="6XHV">
    <property type="method" value="X-ray"/>
    <property type="resolution" value="2.40 A"/>
    <property type="chains" value="16/26=1-54"/>
</dbReference>
<dbReference type="PDB" id="6XHW">
    <property type="method" value="X-ray"/>
    <property type="resolution" value="2.50 A"/>
    <property type="chains" value="16/26=1-54"/>
</dbReference>
<dbReference type="PDB" id="6XHX">
    <property type="method" value="X-ray"/>
    <property type="resolution" value="2.55 A"/>
    <property type="chains" value="16/26=1-54"/>
</dbReference>
<dbReference type="PDB" id="6XHY">
    <property type="method" value="X-ray"/>
    <property type="resolution" value="2.60 A"/>
    <property type="chains" value="16/26=1-54"/>
</dbReference>
<dbReference type="PDB" id="6XQD">
    <property type="method" value="X-ray"/>
    <property type="resolution" value="2.80 A"/>
    <property type="chains" value="16/26=1-54"/>
</dbReference>
<dbReference type="PDB" id="6XQE">
    <property type="method" value="X-ray"/>
    <property type="resolution" value="3.00 A"/>
    <property type="chains" value="16/26=1-54"/>
</dbReference>
<dbReference type="PDB" id="7AZO">
    <property type="method" value="X-ray"/>
    <property type="resolution" value="3.30 A"/>
    <property type="chains" value="L33A/L33B=1-54"/>
</dbReference>
<dbReference type="PDB" id="7AZS">
    <property type="method" value="X-ray"/>
    <property type="resolution" value="3.10 A"/>
    <property type="chains" value="L33A/L33B=1-54"/>
</dbReference>
<dbReference type="PDB" id="7JQL">
    <property type="method" value="X-ray"/>
    <property type="resolution" value="3.00 A"/>
    <property type="chains" value="16/26=1-54"/>
</dbReference>
<dbReference type="PDB" id="7JQM">
    <property type="method" value="X-ray"/>
    <property type="resolution" value="3.05 A"/>
    <property type="chains" value="16/26=1-54"/>
</dbReference>
<dbReference type="PDB" id="7LH5">
    <property type="method" value="X-ray"/>
    <property type="resolution" value="3.27 A"/>
    <property type="chains" value="B6/D6=1-54"/>
</dbReference>
<dbReference type="PDB" id="7MD7">
    <property type="method" value="X-ray"/>
    <property type="resolution" value="2.80 A"/>
    <property type="chains" value="16/26=1-54"/>
</dbReference>
<dbReference type="PDB" id="7RQ8">
    <property type="method" value="X-ray"/>
    <property type="resolution" value="2.50 A"/>
    <property type="chains" value="16/26=1-54"/>
</dbReference>
<dbReference type="PDB" id="7RQ9">
    <property type="method" value="X-ray"/>
    <property type="resolution" value="2.60 A"/>
    <property type="chains" value="16/26=1-54"/>
</dbReference>
<dbReference type="PDB" id="7RQA">
    <property type="method" value="X-ray"/>
    <property type="resolution" value="2.40 A"/>
    <property type="chains" value="16/26=1-54"/>
</dbReference>
<dbReference type="PDB" id="7RQB">
    <property type="method" value="X-ray"/>
    <property type="resolution" value="2.45 A"/>
    <property type="chains" value="16/26=1-54"/>
</dbReference>
<dbReference type="PDB" id="7RQC">
    <property type="method" value="X-ray"/>
    <property type="resolution" value="2.50 A"/>
    <property type="chains" value="16/26=1-54"/>
</dbReference>
<dbReference type="PDB" id="7RQD">
    <property type="method" value="X-ray"/>
    <property type="resolution" value="2.50 A"/>
    <property type="chains" value="16/26=1-54"/>
</dbReference>
<dbReference type="PDB" id="7RQE">
    <property type="method" value="X-ray"/>
    <property type="resolution" value="2.40 A"/>
    <property type="chains" value="16/26=1-54"/>
</dbReference>
<dbReference type="PDB" id="7U2H">
    <property type="method" value="X-ray"/>
    <property type="resolution" value="2.55 A"/>
    <property type="chains" value="16/26=1-54"/>
</dbReference>
<dbReference type="PDB" id="7U2I">
    <property type="method" value="X-ray"/>
    <property type="resolution" value="2.55 A"/>
    <property type="chains" value="16/26=1-54"/>
</dbReference>
<dbReference type="PDB" id="7U2J">
    <property type="method" value="X-ray"/>
    <property type="resolution" value="2.55 A"/>
    <property type="chains" value="16/26=1-54"/>
</dbReference>
<dbReference type="PDB" id="8CVJ">
    <property type="method" value="X-ray"/>
    <property type="resolution" value="2.40 A"/>
    <property type="chains" value="16/26=1-54"/>
</dbReference>
<dbReference type="PDB" id="8CVK">
    <property type="method" value="X-ray"/>
    <property type="resolution" value="2.50 A"/>
    <property type="chains" value="16/26=1-54"/>
</dbReference>
<dbReference type="PDB" id="8CVL">
    <property type="method" value="X-ray"/>
    <property type="resolution" value="2.30 A"/>
    <property type="chains" value="16/26=1-54"/>
</dbReference>
<dbReference type="PDB" id="8EKB">
    <property type="method" value="X-ray"/>
    <property type="resolution" value="2.70 A"/>
    <property type="chains" value="16/26=1-54"/>
</dbReference>
<dbReference type="PDB" id="8EV6">
    <property type="method" value="X-ray"/>
    <property type="resolution" value="2.95 A"/>
    <property type="chains" value="16/26=1-54"/>
</dbReference>
<dbReference type="PDB" id="8EV7">
    <property type="method" value="X-ray"/>
    <property type="resolution" value="2.89 A"/>
    <property type="chains" value="16/26=1-54"/>
</dbReference>
<dbReference type="PDB" id="8FC1">
    <property type="method" value="X-ray"/>
    <property type="resolution" value="2.50 A"/>
    <property type="chains" value="16/26=1-54"/>
</dbReference>
<dbReference type="PDB" id="8FC2">
    <property type="method" value="X-ray"/>
    <property type="resolution" value="2.50 A"/>
    <property type="chains" value="16/26=1-54"/>
</dbReference>
<dbReference type="PDB" id="8FC3">
    <property type="method" value="X-ray"/>
    <property type="resolution" value="2.60 A"/>
    <property type="chains" value="16/26=1-54"/>
</dbReference>
<dbReference type="PDB" id="8FC4">
    <property type="method" value="X-ray"/>
    <property type="resolution" value="2.45 A"/>
    <property type="chains" value="16/26=1-54"/>
</dbReference>
<dbReference type="PDB" id="8FC5">
    <property type="method" value="X-ray"/>
    <property type="resolution" value="2.65 A"/>
    <property type="chains" value="16/26=1-54"/>
</dbReference>
<dbReference type="PDB" id="8FC6">
    <property type="method" value="X-ray"/>
    <property type="resolution" value="2.35 A"/>
    <property type="chains" value="16/26=1-54"/>
</dbReference>
<dbReference type="PDB" id="8FOM">
    <property type="method" value="X-ray"/>
    <property type="resolution" value="3.58 A"/>
    <property type="chains" value="R6/Y6=1-54"/>
</dbReference>
<dbReference type="PDB" id="8FON">
    <property type="method" value="X-ray"/>
    <property type="resolution" value="3.64 A"/>
    <property type="chains" value="R6/Y6=1-54"/>
</dbReference>
<dbReference type="PDB" id="8G29">
    <property type="method" value="X-ray"/>
    <property type="resolution" value="2.55 A"/>
    <property type="chains" value="16/26=1-54"/>
</dbReference>
<dbReference type="PDB" id="8G2A">
    <property type="method" value="X-ray"/>
    <property type="resolution" value="2.45 A"/>
    <property type="chains" value="16/26=1-54"/>
</dbReference>
<dbReference type="PDB" id="8G2B">
    <property type="method" value="X-ray"/>
    <property type="resolution" value="2.55 A"/>
    <property type="chains" value="16/26=1-54"/>
</dbReference>
<dbReference type="PDB" id="8G2C">
    <property type="method" value="X-ray"/>
    <property type="resolution" value="2.65 A"/>
    <property type="chains" value="16/26=1-54"/>
</dbReference>
<dbReference type="PDB" id="8G2D">
    <property type="method" value="X-ray"/>
    <property type="resolution" value="2.70 A"/>
    <property type="chains" value="16/26=1-54"/>
</dbReference>
<dbReference type="PDB" id="8T8B">
    <property type="method" value="X-ray"/>
    <property type="resolution" value="2.65 A"/>
    <property type="chains" value="16/26=1-54"/>
</dbReference>
<dbReference type="PDB" id="8T8C">
    <property type="method" value="X-ray"/>
    <property type="resolution" value="2.60 A"/>
    <property type="chains" value="16/26=1-54"/>
</dbReference>
<dbReference type="PDB" id="8UD6">
    <property type="method" value="X-ray"/>
    <property type="resolution" value="2.70 A"/>
    <property type="chains" value="16/26=1-54"/>
</dbReference>
<dbReference type="PDB" id="8UD7">
    <property type="method" value="X-ray"/>
    <property type="resolution" value="2.55 A"/>
    <property type="chains" value="16/26=1-54"/>
</dbReference>
<dbReference type="PDB" id="8UD8">
    <property type="method" value="X-ray"/>
    <property type="resolution" value="2.60 A"/>
    <property type="chains" value="16/26=1-54"/>
</dbReference>
<dbReference type="PDB" id="8UVR">
    <property type="method" value="X-ray"/>
    <property type="resolution" value="2.60 A"/>
    <property type="chains" value="16/26=1-54"/>
</dbReference>
<dbReference type="PDB" id="8UVS">
    <property type="method" value="X-ray"/>
    <property type="resolution" value="2.75 A"/>
    <property type="chains" value="16/26=1-54"/>
</dbReference>
<dbReference type="PDB" id="8VTU">
    <property type="method" value="X-ray"/>
    <property type="resolution" value="2.40 A"/>
    <property type="chains" value="16/26=1-54"/>
</dbReference>
<dbReference type="PDB" id="8VTV">
    <property type="method" value="X-ray"/>
    <property type="resolution" value="2.55 A"/>
    <property type="chains" value="16/26=1-54"/>
</dbReference>
<dbReference type="PDB" id="8VTW">
    <property type="method" value="X-ray"/>
    <property type="resolution" value="2.35 A"/>
    <property type="chains" value="16/26=1-54"/>
</dbReference>
<dbReference type="PDB" id="8VTX">
    <property type="method" value="X-ray"/>
    <property type="resolution" value="2.40 A"/>
    <property type="chains" value="16/26=1-54"/>
</dbReference>
<dbReference type="PDB" id="8VTY">
    <property type="method" value="X-ray"/>
    <property type="resolution" value="2.60 A"/>
    <property type="chains" value="16/26=1-54"/>
</dbReference>
<dbReference type="PDB" id="8WV1">
    <property type="method" value="X-ray"/>
    <property type="resolution" value="3.99 A"/>
    <property type="chains" value="13/6=1-54"/>
</dbReference>
<dbReference type="PDB" id="9B00">
    <property type="method" value="X-ray"/>
    <property type="resolution" value="2.80 A"/>
    <property type="chains" value="16/26=1-54"/>
</dbReference>
<dbReference type="PDB" id="9D0J">
    <property type="method" value="X-ray"/>
    <property type="resolution" value="2.50 A"/>
    <property type="chains" value="16/26=1-54"/>
</dbReference>
<dbReference type="PDB" id="9D7R">
    <property type="method" value="X-ray"/>
    <property type="resolution" value="2.70 A"/>
    <property type="chains" value="16/26=1-54"/>
</dbReference>
<dbReference type="PDB" id="9D7S">
    <property type="method" value="X-ray"/>
    <property type="resolution" value="2.85 A"/>
    <property type="chains" value="16/26=1-54"/>
</dbReference>
<dbReference type="PDB" id="9D7T">
    <property type="method" value="X-ray"/>
    <property type="resolution" value="2.70 A"/>
    <property type="chains" value="16/26=1-54"/>
</dbReference>
<dbReference type="PDB" id="9DFC">
    <property type="method" value="X-ray"/>
    <property type="resolution" value="2.50 A"/>
    <property type="chains" value="16/26=1-54"/>
</dbReference>
<dbReference type="PDB" id="9DFD">
    <property type="method" value="X-ray"/>
    <property type="resolution" value="2.60 A"/>
    <property type="chains" value="16/26=1-54"/>
</dbReference>
<dbReference type="PDB" id="9DFE">
    <property type="method" value="X-ray"/>
    <property type="resolution" value="2.60 A"/>
    <property type="chains" value="16/26=1-54"/>
</dbReference>
<dbReference type="PDBsum" id="1VVJ"/>
<dbReference type="PDBsum" id="1VY4"/>
<dbReference type="PDBsum" id="1VY5"/>
<dbReference type="PDBsum" id="1VY6"/>
<dbReference type="PDBsum" id="1VY7"/>
<dbReference type="PDBsum" id="4L47"/>
<dbReference type="PDBsum" id="4L71"/>
<dbReference type="PDBsum" id="4LEL"/>
<dbReference type="PDBsum" id="4LFZ"/>
<dbReference type="PDBsum" id="4LNT"/>
<dbReference type="PDBsum" id="4LSK"/>
<dbReference type="PDBsum" id="4LT8"/>
<dbReference type="PDBsum" id="4P6F"/>
<dbReference type="PDBsum" id="4P70"/>
<dbReference type="PDBsum" id="4TUA"/>
<dbReference type="PDBsum" id="4TUB"/>
<dbReference type="PDBsum" id="4TUC"/>
<dbReference type="PDBsum" id="4TUD"/>
<dbReference type="PDBsum" id="4TUE"/>
<dbReference type="PDBsum" id="4V4P"/>
<dbReference type="PDBsum" id="4V4X"/>
<dbReference type="PDBsum" id="4V4Y"/>
<dbReference type="PDBsum" id="4V4Z"/>
<dbReference type="PDBsum" id="4V51"/>
<dbReference type="PDBsum" id="4V5A"/>
<dbReference type="PDBsum" id="4V5C"/>
<dbReference type="PDBsum" id="4V5D"/>
<dbReference type="PDBsum" id="4V5E"/>
<dbReference type="PDBsum" id="4V5F"/>
<dbReference type="PDBsum" id="4V5G"/>
<dbReference type="PDBsum" id="4V5J"/>
<dbReference type="PDBsum" id="4V5K"/>
<dbReference type="PDBsum" id="4V5L"/>
<dbReference type="PDBsum" id="4V5M"/>
<dbReference type="PDBsum" id="4V5N"/>
<dbReference type="PDBsum" id="4V5P"/>
<dbReference type="PDBsum" id="4V5Q"/>
<dbReference type="PDBsum" id="4V5R"/>
<dbReference type="PDBsum" id="4V5S"/>
<dbReference type="PDBsum" id="4V68"/>
<dbReference type="PDBsum" id="4V6A"/>
<dbReference type="PDBsum" id="4V6F"/>
<dbReference type="PDBsum" id="4V6G"/>
<dbReference type="PDBsum" id="4V7J"/>
<dbReference type="PDBsum" id="4V7K"/>
<dbReference type="PDBsum" id="4V7L"/>
<dbReference type="PDBsum" id="4V7M"/>
<dbReference type="PDBsum" id="4V7W"/>
<dbReference type="PDBsum" id="4V7X"/>
<dbReference type="PDBsum" id="4V7Y"/>
<dbReference type="PDBsum" id="4V7Z"/>
<dbReference type="PDBsum" id="4V87"/>
<dbReference type="PDBsum" id="4V8A"/>
<dbReference type="PDBsum" id="4V8B"/>
<dbReference type="PDBsum" id="4V8C"/>
<dbReference type="PDBsum" id="4V8D"/>
<dbReference type="PDBsum" id="4V8E"/>
<dbReference type="PDBsum" id="4V8F"/>
<dbReference type="PDBsum" id="4V8G"/>
<dbReference type="PDBsum" id="4V8H"/>
<dbReference type="PDBsum" id="4V8I"/>
<dbReference type="PDBsum" id="4V8J"/>
<dbReference type="PDBsum" id="4V8N"/>
<dbReference type="PDBsum" id="4V8O"/>
<dbReference type="PDBsum" id="4V8Q"/>
<dbReference type="PDBsum" id="4V8U"/>
<dbReference type="PDBsum" id="4V8X"/>
<dbReference type="PDBsum" id="4V90"/>
<dbReference type="PDBsum" id="4V95"/>
<dbReference type="PDBsum" id="4V97"/>
<dbReference type="PDBsum" id="4V9A"/>
<dbReference type="PDBsum" id="4V9B"/>
<dbReference type="PDBsum" id="4V9H"/>
<dbReference type="PDBsum" id="4V9I"/>
<dbReference type="PDBsum" id="4V9R"/>
<dbReference type="PDBsum" id="4V9S"/>
<dbReference type="PDBsum" id="4W2E"/>
<dbReference type="PDBsum" id="4W2F"/>
<dbReference type="PDBsum" id="4W2G"/>
<dbReference type="PDBsum" id="4W2H"/>
<dbReference type="PDBsum" id="4W2I"/>
<dbReference type="PDBsum" id="4W4G"/>
<dbReference type="PDBsum" id="4WPO"/>
<dbReference type="PDBsum" id="4WQ1"/>
<dbReference type="PDBsum" id="4WQF"/>
<dbReference type="PDBsum" id="4WQR"/>
<dbReference type="PDBsum" id="4WQU"/>
<dbReference type="PDBsum" id="4WQY"/>
<dbReference type="PDBsum" id="4WRO"/>
<dbReference type="PDBsum" id="4WSD"/>
<dbReference type="PDBsum" id="4WT1"/>
<dbReference type="PDBsum" id="4WT8"/>
<dbReference type="PDBsum" id="4WZD"/>
<dbReference type="PDBsum" id="4Y4O"/>
<dbReference type="PDBsum" id="4Y4P"/>
<dbReference type="PDBsum" id="4YPB"/>
<dbReference type="PDBsum" id="4YZV"/>
<dbReference type="PDBsum" id="4Z3S"/>
<dbReference type="PDBsum" id="4Z8C"/>
<dbReference type="PDBsum" id="4ZER"/>
<dbReference type="PDBsum" id="4ZSN"/>
<dbReference type="PDBsum" id="5A9Z"/>
<dbReference type="PDBsum" id="5AA0"/>
<dbReference type="PDBsum" id="5CZP"/>
<dbReference type="PDBsum" id="5D8B"/>
<dbReference type="PDBsum" id="5DFE"/>
<dbReference type="PDBsum" id="5DOX"/>
<dbReference type="PDBsum" id="5DOY"/>
<dbReference type="PDBsum" id="5F8K"/>
<dbReference type="PDBsum" id="5FDU"/>
<dbReference type="PDBsum" id="5FDV"/>
<dbReference type="PDBsum" id="5HAU"/>
<dbReference type="PDBsum" id="5HCP"/>
<dbReference type="PDBsum" id="5HCQ"/>
<dbReference type="PDBsum" id="5HCR"/>
<dbReference type="PDBsum" id="5HD1"/>
<dbReference type="PDBsum" id="5IB7"/>
<dbReference type="PDBsum" id="5IMQ"/>
<dbReference type="PDBsum" id="5IMR"/>
<dbReference type="PDBsum" id="5J30"/>
<dbReference type="PDBsum" id="5J3C"/>
<dbReference type="PDBsum" id="5J4B"/>
<dbReference type="PDBsum" id="5J4C"/>
<dbReference type="PDBsum" id="5J8B"/>
<dbReference type="PDBsum" id="5OT7"/>
<dbReference type="PDBsum" id="5UQ7"/>
<dbReference type="PDBsum" id="5UQ8"/>
<dbReference type="PDBsum" id="5VP2"/>
<dbReference type="PDBsum" id="5VPO"/>
<dbReference type="PDBsum" id="5VPP"/>
<dbReference type="PDBsum" id="5W4K"/>
<dbReference type="PDBsum" id="5WIS"/>
<dbReference type="PDBsum" id="5WIT"/>
<dbReference type="PDBsum" id="5ZLU"/>
<dbReference type="PDBsum" id="6BUW"/>
<dbReference type="PDBsum" id="6BZ6"/>
<dbReference type="PDBsum" id="6BZ7"/>
<dbReference type="PDBsum" id="6BZ8"/>
<dbReference type="PDBsum" id="6C5L"/>
<dbReference type="PDBsum" id="6CAE"/>
<dbReference type="PDBsum" id="6CFJ"/>
<dbReference type="PDBsum" id="6CFK"/>
<dbReference type="PDBsum" id="6CFL"/>
<dbReference type="PDBsum" id="6CZR"/>
<dbReference type="PDBsum" id="6FKR"/>
<dbReference type="PDBsum" id="6GSL"/>
<dbReference type="PDBsum" id="6GZQ"/>
<dbReference type="PDBsum" id="6GZX"/>
<dbReference type="PDBsum" id="6GZZ"/>
<dbReference type="PDBsum" id="6N9E"/>
<dbReference type="PDBsum" id="6N9F"/>
<dbReference type="PDBsum" id="6ND5"/>
<dbReference type="PDBsum" id="6ND6"/>
<dbReference type="PDBsum" id="6NDK"/>
<dbReference type="PDBsum" id="6NSH"/>
<dbReference type="PDBsum" id="6NTA"/>
<dbReference type="PDBsum" id="6NUO"/>
<dbReference type="PDBsum" id="6NWY"/>
<dbReference type="PDBsum" id="6O3M"/>
<dbReference type="PDBsum" id="6O97"/>
<dbReference type="PDBsum" id="6OF1"/>
<dbReference type="PDBsum" id="6OF6"/>
<dbReference type="PDBsum" id="6OJ2"/>
<dbReference type="PDBsum" id="6OPE"/>
<dbReference type="PDBsum" id="6ORD"/>
<dbReference type="PDBsum" id="6OSI"/>
<dbReference type="PDBsum" id="6OTR"/>
<dbReference type="PDBsum" id="6OXA"/>
<dbReference type="PDBsum" id="6OXI"/>
<dbReference type="PDBsum" id="6Q95"/>
<dbReference type="PDBsum" id="6QNQ"/>
<dbReference type="PDBsum" id="6QNR"/>
<dbReference type="PDBsum" id="6UCQ"/>
<dbReference type="PDBsum" id="6UO1"/>
<dbReference type="PDBsum" id="6XHV"/>
<dbReference type="PDBsum" id="6XHW"/>
<dbReference type="PDBsum" id="6XHX"/>
<dbReference type="PDBsum" id="6XHY"/>
<dbReference type="PDBsum" id="6XQD"/>
<dbReference type="PDBsum" id="6XQE"/>
<dbReference type="PDBsum" id="7AZO"/>
<dbReference type="PDBsum" id="7AZS"/>
<dbReference type="PDBsum" id="7JQL"/>
<dbReference type="PDBsum" id="7JQM"/>
<dbReference type="PDBsum" id="7LH5"/>
<dbReference type="PDBsum" id="7MD7"/>
<dbReference type="PDBsum" id="7RQ8"/>
<dbReference type="PDBsum" id="7RQ9"/>
<dbReference type="PDBsum" id="7RQA"/>
<dbReference type="PDBsum" id="7RQB"/>
<dbReference type="PDBsum" id="7RQC"/>
<dbReference type="PDBsum" id="7RQD"/>
<dbReference type="PDBsum" id="7RQE"/>
<dbReference type="PDBsum" id="7U2H"/>
<dbReference type="PDBsum" id="7U2I"/>
<dbReference type="PDBsum" id="7U2J"/>
<dbReference type="PDBsum" id="8CVJ"/>
<dbReference type="PDBsum" id="8CVK"/>
<dbReference type="PDBsum" id="8CVL"/>
<dbReference type="PDBsum" id="8EKB"/>
<dbReference type="PDBsum" id="8EV6"/>
<dbReference type="PDBsum" id="8EV7"/>
<dbReference type="PDBsum" id="8FC1"/>
<dbReference type="PDBsum" id="8FC2"/>
<dbReference type="PDBsum" id="8FC3"/>
<dbReference type="PDBsum" id="8FC4"/>
<dbReference type="PDBsum" id="8FC5"/>
<dbReference type="PDBsum" id="8FC6"/>
<dbReference type="PDBsum" id="8FOM"/>
<dbReference type="PDBsum" id="8FON"/>
<dbReference type="PDBsum" id="8G29"/>
<dbReference type="PDBsum" id="8G2A"/>
<dbReference type="PDBsum" id="8G2B"/>
<dbReference type="PDBsum" id="8G2C"/>
<dbReference type="PDBsum" id="8G2D"/>
<dbReference type="PDBsum" id="8T8B"/>
<dbReference type="PDBsum" id="8T8C"/>
<dbReference type="PDBsum" id="8UD6"/>
<dbReference type="PDBsum" id="8UD7"/>
<dbReference type="PDBsum" id="8UD8"/>
<dbReference type="PDBsum" id="8UVR"/>
<dbReference type="PDBsum" id="8UVS"/>
<dbReference type="PDBsum" id="8VTU"/>
<dbReference type="PDBsum" id="8VTV"/>
<dbReference type="PDBsum" id="8VTW"/>
<dbReference type="PDBsum" id="8VTX"/>
<dbReference type="PDBsum" id="8VTY"/>
<dbReference type="PDBsum" id="8WV1"/>
<dbReference type="PDBsum" id="9B00"/>
<dbReference type="PDBsum" id="9D0J"/>
<dbReference type="PDBsum" id="9D7R"/>
<dbReference type="PDBsum" id="9D7S"/>
<dbReference type="PDBsum" id="9D7T"/>
<dbReference type="PDBsum" id="9DFC"/>
<dbReference type="PDBsum" id="9DFD"/>
<dbReference type="PDBsum" id="9DFE"/>
<dbReference type="EMDB" id="EMD-0101"/>
<dbReference type="EMDB" id="EMD-0104"/>
<dbReference type="EMDB" id="EMD-0105"/>
<dbReference type="EMDB" id="EMD-3852"/>
<dbReference type="EMDB" id="EMD-4475"/>
<dbReference type="EMDB" id="EMD-6934"/>
<dbReference type="EMDB" id="EMD-8596"/>
<dbReference type="EMDB" id="EMD-8597"/>
<dbReference type="SMR" id="P35871"/>
<dbReference type="IntAct" id="P35871">
    <property type="interactions" value="8"/>
</dbReference>
<dbReference type="EnsemblBacteria" id="BAD70073">
    <property type="protein sequence ID" value="BAD70073"/>
    <property type="gene ID" value="BAD70073"/>
</dbReference>
<dbReference type="GeneID" id="3167958"/>
<dbReference type="KEGG" id="ttj:TTHA0250"/>
<dbReference type="PATRIC" id="fig|300852.9.peg.250"/>
<dbReference type="eggNOG" id="COG0267">
    <property type="taxonomic scope" value="Bacteria"/>
</dbReference>
<dbReference type="HOGENOM" id="CLU_190949_0_2_0"/>
<dbReference type="PhylomeDB" id="P35871"/>
<dbReference type="Proteomes" id="UP000000532">
    <property type="component" value="Chromosome"/>
</dbReference>
<dbReference type="GO" id="GO:0005737">
    <property type="term" value="C:cytoplasm"/>
    <property type="evidence" value="ECO:0007669"/>
    <property type="project" value="UniProtKB-ARBA"/>
</dbReference>
<dbReference type="GO" id="GO:1990904">
    <property type="term" value="C:ribonucleoprotein complex"/>
    <property type="evidence" value="ECO:0007669"/>
    <property type="project" value="UniProtKB-KW"/>
</dbReference>
<dbReference type="GO" id="GO:0005840">
    <property type="term" value="C:ribosome"/>
    <property type="evidence" value="ECO:0007669"/>
    <property type="project" value="UniProtKB-KW"/>
</dbReference>
<dbReference type="GO" id="GO:0019843">
    <property type="term" value="F:rRNA binding"/>
    <property type="evidence" value="ECO:0007669"/>
    <property type="project" value="UniProtKB-KW"/>
</dbReference>
<dbReference type="GO" id="GO:0003735">
    <property type="term" value="F:structural constituent of ribosome"/>
    <property type="evidence" value="ECO:0007669"/>
    <property type="project" value="InterPro"/>
</dbReference>
<dbReference type="GO" id="GO:0000049">
    <property type="term" value="F:tRNA binding"/>
    <property type="evidence" value="ECO:0007669"/>
    <property type="project" value="UniProtKB-KW"/>
</dbReference>
<dbReference type="GO" id="GO:0006412">
    <property type="term" value="P:translation"/>
    <property type="evidence" value="ECO:0007669"/>
    <property type="project" value="UniProtKB-UniRule"/>
</dbReference>
<dbReference type="Gene3D" id="2.20.28.120">
    <property type="entry name" value="Ribosomal protein L33"/>
    <property type="match status" value="1"/>
</dbReference>
<dbReference type="HAMAP" id="MF_00294">
    <property type="entry name" value="Ribosomal_bL33"/>
    <property type="match status" value="1"/>
</dbReference>
<dbReference type="InterPro" id="IPR001705">
    <property type="entry name" value="Ribosomal_bL33"/>
</dbReference>
<dbReference type="InterPro" id="IPR018264">
    <property type="entry name" value="Ribosomal_bL33_CS"/>
</dbReference>
<dbReference type="InterPro" id="IPR038584">
    <property type="entry name" value="Ribosomal_bL33_sf"/>
</dbReference>
<dbReference type="InterPro" id="IPR011332">
    <property type="entry name" value="Ribosomal_zn-bd"/>
</dbReference>
<dbReference type="NCBIfam" id="NF001764">
    <property type="entry name" value="PRK00504.1"/>
    <property type="match status" value="1"/>
</dbReference>
<dbReference type="NCBIfam" id="NF001860">
    <property type="entry name" value="PRK00595.1"/>
    <property type="match status" value="1"/>
</dbReference>
<dbReference type="NCBIfam" id="TIGR01023">
    <property type="entry name" value="rpmG_bact"/>
    <property type="match status" value="1"/>
</dbReference>
<dbReference type="PANTHER" id="PTHR43168">
    <property type="entry name" value="50S RIBOSOMAL PROTEIN L33, CHLOROPLASTIC"/>
    <property type="match status" value="1"/>
</dbReference>
<dbReference type="PANTHER" id="PTHR43168:SF2">
    <property type="entry name" value="LARGE RIBOSOMAL SUBUNIT PROTEIN BL33C"/>
    <property type="match status" value="1"/>
</dbReference>
<dbReference type="Pfam" id="PF00471">
    <property type="entry name" value="Ribosomal_L33"/>
    <property type="match status" value="1"/>
</dbReference>
<dbReference type="SUPFAM" id="SSF57829">
    <property type="entry name" value="Zn-binding ribosomal proteins"/>
    <property type="match status" value="1"/>
</dbReference>
<dbReference type="PROSITE" id="PS00582">
    <property type="entry name" value="RIBOSOMAL_L33"/>
    <property type="match status" value="1"/>
</dbReference>
<proteinExistence type="evidence at protein level"/>
<evidence type="ECO:0000269" key="1">
    <source>
    </source>
</evidence>
<evidence type="ECO:0000269" key="2">
    <source>
    </source>
</evidence>
<evidence type="ECO:0000305" key="3"/>
<evidence type="ECO:0007829" key="4">
    <source>
        <dbReference type="PDB" id="4WT8"/>
    </source>
</evidence>
<organism>
    <name type="scientific">Thermus thermophilus (strain ATCC 27634 / DSM 579 / HB8)</name>
    <dbReference type="NCBI Taxonomy" id="300852"/>
    <lineage>
        <taxon>Bacteria</taxon>
        <taxon>Thermotogati</taxon>
        <taxon>Deinococcota</taxon>
        <taxon>Deinococci</taxon>
        <taxon>Thermales</taxon>
        <taxon>Thermaceae</taxon>
        <taxon>Thermus</taxon>
    </lineage>
</organism>
<feature type="initiator methionine" description="Removed" evidence="1">
    <location>
        <position position="1"/>
    </location>
</feature>
<feature type="chain" id="PRO_0000170257" description="Large ribosomal subunit protein bL33">
    <location>
        <begin position="2"/>
        <end position="54"/>
    </location>
</feature>
<feature type="strand" evidence="4">
    <location>
        <begin position="16"/>
        <end position="18"/>
    </location>
</feature>
<feature type="turn" evidence="4">
    <location>
        <begin position="28"/>
        <end position="31"/>
    </location>
</feature>
<feature type="strand" evidence="4">
    <location>
        <begin position="42"/>
        <end position="44"/>
    </location>
</feature>